<keyword id="KW-0067">ATP-binding</keyword>
<keyword id="KW-0963">Cytoplasm</keyword>
<keyword id="KW-0418">Kinase</keyword>
<keyword id="KW-0460">Magnesium</keyword>
<keyword id="KW-0479">Metal-binding</keyword>
<keyword id="KW-0546">Nucleotide metabolism</keyword>
<keyword id="KW-0547">Nucleotide-binding</keyword>
<keyword id="KW-0597">Phosphoprotein</keyword>
<keyword id="KW-0808">Transferase</keyword>
<evidence type="ECO:0000255" key="1">
    <source>
        <dbReference type="HAMAP-Rule" id="MF_00451"/>
    </source>
</evidence>
<feature type="chain" id="PRO_1000026220" description="Nucleoside diphosphate kinase">
    <location>
        <begin position="1"/>
        <end position="137"/>
    </location>
</feature>
<feature type="active site" description="Pros-phosphohistidine intermediate" evidence="1">
    <location>
        <position position="115"/>
    </location>
</feature>
<feature type="binding site" evidence="1">
    <location>
        <position position="9"/>
    </location>
    <ligand>
        <name>ATP</name>
        <dbReference type="ChEBI" id="CHEBI:30616"/>
    </ligand>
</feature>
<feature type="binding site" evidence="1">
    <location>
        <position position="57"/>
    </location>
    <ligand>
        <name>ATP</name>
        <dbReference type="ChEBI" id="CHEBI:30616"/>
    </ligand>
</feature>
<feature type="binding site" evidence="1">
    <location>
        <position position="85"/>
    </location>
    <ligand>
        <name>ATP</name>
        <dbReference type="ChEBI" id="CHEBI:30616"/>
    </ligand>
</feature>
<feature type="binding site" evidence="1">
    <location>
        <position position="91"/>
    </location>
    <ligand>
        <name>ATP</name>
        <dbReference type="ChEBI" id="CHEBI:30616"/>
    </ligand>
</feature>
<feature type="binding site" evidence="1">
    <location>
        <position position="102"/>
    </location>
    <ligand>
        <name>ATP</name>
        <dbReference type="ChEBI" id="CHEBI:30616"/>
    </ligand>
</feature>
<feature type="binding site" evidence="1">
    <location>
        <position position="112"/>
    </location>
    <ligand>
        <name>ATP</name>
        <dbReference type="ChEBI" id="CHEBI:30616"/>
    </ligand>
</feature>
<gene>
    <name evidence="1" type="primary">ndk</name>
    <name type="ordered locus">Ccon26_04100</name>
    <name type="ORF">CCC13826_0990</name>
</gene>
<organism>
    <name type="scientific">Campylobacter concisus (strain 13826)</name>
    <dbReference type="NCBI Taxonomy" id="360104"/>
    <lineage>
        <taxon>Bacteria</taxon>
        <taxon>Pseudomonadati</taxon>
        <taxon>Campylobacterota</taxon>
        <taxon>Epsilonproteobacteria</taxon>
        <taxon>Campylobacterales</taxon>
        <taxon>Campylobacteraceae</taxon>
        <taxon>Campylobacter</taxon>
    </lineage>
</organism>
<reference key="1">
    <citation type="submission" date="2007-10" db="EMBL/GenBank/DDBJ databases">
        <title>Genome sequence of Campylobacter concisus 13826 isolated from human feces.</title>
        <authorList>
            <person name="Fouts D.E."/>
            <person name="Mongodin E.F."/>
            <person name="Puiu D."/>
            <person name="Sebastian Y."/>
            <person name="Miller W.G."/>
            <person name="Mandrell R.E."/>
            <person name="On S."/>
            <person name="Nelson K.E."/>
        </authorList>
    </citation>
    <scope>NUCLEOTIDE SEQUENCE [LARGE SCALE GENOMIC DNA]</scope>
    <source>
        <strain>13826</strain>
    </source>
</reference>
<name>NDK_CAMC1</name>
<dbReference type="EC" id="2.7.4.6" evidence="1"/>
<dbReference type="EMBL" id="CP000792">
    <property type="protein sequence ID" value="EAT98195.1"/>
    <property type="molecule type" value="Genomic_DNA"/>
</dbReference>
<dbReference type="RefSeq" id="WP_002942517.1">
    <property type="nucleotide sequence ID" value="NC_009802.2"/>
</dbReference>
<dbReference type="SMR" id="A7ZC05"/>
<dbReference type="STRING" id="360104.CCC13826_0990"/>
<dbReference type="KEGG" id="cco:CCC13826_0990"/>
<dbReference type="eggNOG" id="COG0105">
    <property type="taxonomic scope" value="Bacteria"/>
</dbReference>
<dbReference type="HOGENOM" id="CLU_060216_8_1_7"/>
<dbReference type="OrthoDB" id="9801161at2"/>
<dbReference type="Proteomes" id="UP000001121">
    <property type="component" value="Chromosome"/>
</dbReference>
<dbReference type="GO" id="GO:0005737">
    <property type="term" value="C:cytoplasm"/>
    <property type="evidence" value="ECO:0007669"/>
    <property type="project" value="UniProtKB-SubCell"/>
</dbReference>
<dbReference type="GO" id="GO:0005524">
    <property type="term" value="F:ATP binding"/>
    <property type="evidence" value="ECO:0007669"/>
    <property type="project" value="UniProtKB-UniRule"/>
</dbReference>
<dbReference type="GO" id="GO:0046872">
    <property type="term" value="F:metal ion binding"/>
    <property type="evidence" value="ECO:0007669"/>
    <property type="project" value="UniProtKB-KW"/>
</dbReference>
<dbReference type="GO" id="GO:0004550">
    <property type="term" value="F:nucleoside diphosphate kinase activity"/>
    <property type="evidence" value="ECO:0007669"/>
    <property type="project" value="UniProtKB-UniRule"/>
</dbReference>
<dbReference type="GO" id="GO:0006241">
    <property type="term" value="P:CTP biosynthetic process"/>
    <property type="evidence" value="ECO:0007669"/>
    <property type="project" value="UniProtKB-UniRule"/>
</dbReference>
<dbReference type="GO" id="GO:0006183">
    <property type="term" value="P:GTP biosynthetic process"/>
    <property type="evidence" value="ECO:0007669"/>
    <property type="project" value="UniProtKB-UniRule"/>
</dbReference>
<dbReference type="GO" id="GO:0006228">
    <property type="term" value="P:UTP biosynthetic process"/>
    <property type="evidence" value="ECO:0007669"/>
    <property type="project" value="UniProtKB-UniRule"/>
</dbReference>
<dbReference type="CDD" id="cd04413">
    <property type="entry name" value="NDPk_I"/>
    <property type="match status" value="1"/>
</dbReference>
<dbReference type="FunFam" id="3.30.70.141:FF:000001">
    <property type="entry name" value="Nucleoside diphosphate kinase"/>
    <property type="match status" value="1"/>
</dbReference>
<dbReference type="Gene3D" id="3.30.70.141">
    <property type="entry name" value="Nucleoside diphosphate kinase-like domain"/>
    <property type="match status" value="1"/>
</dbReference>
<dbReference type="HAMAP" id="MF_00451">
    <property type="entry name" value="NDP_kinase"/>
    <property type="match status" value="1"/>
</dbReference>
<dbReference type="InterPro" id="IPR034907">
    <property type="entry name" value="NDK-like_dom"/>
</dbReference>
<dbReference type="InterPro" id="IPR036850">
    <property type="entry name" value="NDK-like_dom_sf"/>
</dbReference>
<dbReference type="InterPro" id="IPR001564">
    <property type="entry name" value="Nucleoside_diP_kinase"/>
</dbReference>
<dbReference type="InterPro" id="IPR023005">
    <property type="entry name" value="Nucleoside_diP_kinase_AS"/>
</dbReference>
<dbReference type="NCBIfam" id="NF001908">
    <property type="entry name" value="PRK00668.1"/>
    <property type="match status" value="1"/>
</dbReference>
<dbReference type="PANTHER" id="PTHR46161">
    <property type="entry name" value="NUCLEOSIDE DIPHOSPHATE KINASE"/>
    <property type="match status" value="1"/>
</dbReference>
<dbReference type="PANTHER" id="PTHR46161:SF3">
    <property type="entry name" value="NUCLEOSIDE DIPHOSPHATE KINASE DDB_G0292928-RELATED"/>
    <property type="match status" value="1"/>
</dbReference>
<dbReference type="Pfam" id="PF00334">
    <property type="entry name" value="NDK"/>
    <property type="match status" value="1"/>
</dbReference>
<dbReference type="PRINTS" id="PR01243">
    <property type="entry name" value="NUCDPKINASE"/>
</dbReference>
<dbReference type="SMART" id="SM00562">
    <property type="entry name" value="NDK"/>
    <property type="match status" value="1"/>
</dbReference>
<dbReference type="SUPFAM" id="SSF54919">
    <property type="entry name" value="Nucleoside diphosphate kinase, NDK"/>
    <property type="match status" value="1"/>
</dbReference>
<dbReference type="PROSITE" id="PS00469">
    <property type="entry name" value="NDPK"/>
    <property type="match status" value="1"/>
</dbReference>
<dbReference type="PROSITE" id="PS51374">
    <property type="entry name" value="NDPK_LIKE"/>
    <property type="match status" value="1"/>
</dbReference>
<sequence>MQRTLSIIKPDAVKKNVVGKIIDRFESNGLRIAAAKKIKLSKCDAKAFYAVHKDRPFFNDLVDFMVSGPVVVMVLEGENAVAKNRELMGATNPKEAAPGTIRADFADSIDANAVHGSDSLENAVNEINFFFASREIC</sequence>
<comment type="function">
    <text evidence="1">Major role in the synthesis of nucleoside triphosphates other than ATP. The ATP gamma phosphate is transferred to the NDP beta phosphate via a ping-pong mechanism, using a phosphorylated active-site intermediate.</text>
</comment>
<comment type="catalytic activity">
    <reaction evidence="1">
        <text>a 2'-deoxyribonucleoside 5'-diphosphate + ATP = a 2'-deoxyribonucleoside 5'-triphosphate + ADP</text>
        <dbReference type="Rhea" id="RHEA:44640"/>
        <dbReference type="ChEBI" id="CHEBI:30616"/>
        <dbReference type="ChEBI" id="CHEBI:61560"/>
        <dbReference type="ChEBI" id="CHEBI:73316"/>
        <dbReference type="ChEBI" id="CHEBI:456216"/>
        <dbReference type="EC" id="2.7.4.6"/>
    </reaction>
</comment>
<comment type="catalytic activity">
    <reaction evidence="1">
        <text>a ribonucleoside 5'-diphosphate + ATP = a ribonucleoside 5'-triphosphate + ADP</text>
        <dbReference type="Rhea" id="RHEA:18113"/>
        <dbReference type="ChEBI" id="CHEBI:30616"/>
        <dbReference type="ChEBI" id="CHEBI:57930"/>
        <dbReference type="ChEBI" id="CHEBI:61557"/>
        <dbReference type="ChEBI" id="CHEBI:456216"/>
        <dbReference type="EC" id="2.7.4.6"/>
    </reaction>
</comment>
<comment type="cofactor">
    <cofactor evidence="1">
        <name>Mg(2+)</name>
        <dbReference type="ChEBI" id="CHEBI:18420"/>
    </cofactor>
</comment>
<comment type="subunit">
    <text evidence="1">Homotetramer.</text>
</comment>
<comment type="subcellular location">
    <subcellularLocation>
        <location evidence="1">Cytoplasm</location>
    </subcellularLocation>
</comment>
<comment type="similarity">
    <text evidence="1">Belongs to the NDK family.</text>
</comment>
<accession>A7ZC05</accession>
<protein>
    <recommendedName>
        <fullName evidence="1">Nucleoside diphosphate kinase</fullName>
        <shortName evidence="1">NDK</shortName>
        <shortName evidence="1">NDP kinase</shortName>
        <ecNumber evidence="1">2.7.4.6</ecNumber>
    </recommendedName>
    <alternativeName>
        <fullName evidence="1">Nucleoside-2-P kinase</fullName>
    </alternativeName>
</protein>
<proteinExistence type="inferred from homology"/>